<reference key="1">
    <citation type="submission" date="2006-03" db="EMBL/GenBank/DDBJ databases">
        <title>Complete sequence of Rhodopseudomonas palustris BisB5.</title>
        <authorList>
            <consortium name="US DOE Joint Genome Institute"/>
            <person name="Copeland A."/>
            <person name="Lucas S."/>
            <person name="Lapidus A."/>
            <person name="Barry K."/>
            <person name="Detter J.C."/>
            <person name="Glavina del Rio T."/>
            <person name="Hammon N."/>
            <person name="Israni S."/>
            <person name="Dalin E."/>
            <person name="Tice H."/>
            <person name="Pitluck S."/>
            <person name="Chain P."/>
            <person name="Malfatti S."/>
            <person name="Shin M."/>
            <person name="Vergez L."/>
            <person name="Schmutz J."/>
            <person name="Larimer F."/>
            <person name="Land M."/>
            <person name="Hauser L."/>
            <person name="Pelletier D.A."/>
            <person name="Kyrpides N."/>
            <person name="Lykidis A."/>
            <person name="Oda Y."/>
            <person name="Harwood C.S."/>
            <person name="Richardson P."/>
        </authorList>
    </citation>
    <scope>NUCLEOTIDE SEQUENCE [LARGE SCALE GENOMIC DNA]</scope>
    <source>
        <strain>BisB5</strain>
    </source>
</reference>
<proteinExistence type="inferred from homology"/>
<organism>
    <name type="scientific">Rhodopseudomonas palustris (strain BisB5)</name>
    <dbReference type="NCBI Taxonomy" id="316057"/>
    <lineage>
        <taxon>Bacteria</taxon>
        <taxon>Pseudomonadati</taxon>
        <taxon>Pseudomonadota</taxon>
        <taxon>Alphaproteobacteria</taxon>
        <taxon>Hyphomicrobiales</taxon>
        <taxon>Nitrobacteraceae</taxon>
        <taxon>Rhodopseudomonas</taxon>
    </lineage>
</organism>
<dbReference type="EMBL" id="CP000283">
    <property type="protein sequence ID" value="ABE37434.1"/>
    <property type="molecule type" value="Genomic_DNA"/>
</dbReference>
<dbReference type="SMR" id="Q13EQ5"/>
<dbReference type="STRING" id="316057.RPD_0194"/>
<dbReference type="KEGG" id="rpd:RPD_0194"/>
<dbReference type="eggNOG" id="COG0776">
    <property type="taxonomic scope" value="Bacteria"/>
</dbReference>
<dbReference type="HOGENOM" id="CLU_105066_2_0_5"/>
<dbReference type="BioCyc" id="RPAL316057:RPD_RS00985-MONOMER"/>
<dbReference type="Proteomes" id="UP000001818">
    <property type="component" value="Chromosome"/>
</dbReference>
<dbReference type="GO" id="GO:0005694">
    <property type="term" value="C:chromosome"/>
    <property type="evidence" value="ECO:0007669"/>
    <property type="project" value="InterPro"/>
</dbReference>
<dbReference type="GO" id="GO:0005829">
    <property type="term" value="C:cytosol"/>
    <property type="evidence" value="ECO:0007669"/>
    <property type="project" value="TreeGrafter"/>
</dbReference>
<dbReference type="GO" id="GO:0003677">
    <property type="term" value="F:DNA binding"/>
    <property type="evidence" value="ECO:0007669"/>
    <property type="project" value="UniProtKB-UniRule"/>
</dbReference>
<dbReference type="GO" id="GO:0030527">
    <property type="term" value="F:structural constituent of chromatin"/>
    <property type="evidence" value="ECO:0007669"/>
    <property type="project" value="InterPro"/>
</dbReference>
<dbReference type="GO" id="GO:0006310">
    <property type="term" value="P:DNA recombination"/>
    <property type="evidence" value="ECO:0007669"/>
    <property type="project" value="UniProtKB-UniRule"/>
</dbReference>
<dbReference type="GO" id="GO:0006355">
    <property type="term" value="P:regulation of DNA-templated transcription"/>
    <property type="evidence" value="ECO:0007669"/>
    <property type="project" value="UniProtKB-UniRule"/>
</dbReference>
<dbReference type="GO" id="GO:0006417">
    <property type="term" value="P:regulation of translation"/>
    <property type="evidence" value="ECO:0007669"/>
    <property type="project" value="UniProtKB-UniRule"/>
</dbReference>
<dbReference type="CDD" id="cd13836">
    <property type="entry name" value="IHF_B"/>
    <property type="match status" value="1"/>
</dbReference>
<dbReference type="FunFam" id="4.10.520.10:FF:000008">
    <property type="entry name" value="Integration host factor subunit beta"/>
    <property type="match status" value="1"/>
</dbReference>
<dbReference type="Gene3D" id="4.10.520.10">
    <property type="entry name" value="IHF-like DNA-binding proteins"/>
    <property type="match status" value="1"/>
</dbReference>
<dbReference type="HAMAP" id="MF_00381">
    <property type="entry name" value="IHF_beta"/>
    <property type="match status" value="1"/>
</dbReference>
<dbReference type="InterPro" id="IPR000119">
    <property type="entry name" value="Hist_DNA-bd"/>
</dbReference>
<dbReference type="InterPro" id="IPR020816">
    <property type="entry name" value="Histone-like_DNA-bd_CS"/>
</dbReference>
<dbReference type="InterPro" id="IPR010992">
    <property type="entry name" value="IHF-like_DNA-bd_dom_sf"/>
</dbReference>
<dbReference type="InterPro" id="IPR005685">
    <property type="entry name" value="IHF_beta"/>
</dbReference>
<dbReference type="NCBIfam" id="TIGR00988">
    <property type="entry name" value="hip"/>
    <property type="match status" value="1"/>
</dbReference>
<dbReference type="NCBIfam" id="NF001222">
    <property type="entry name" value="PRK00199.1"/>
    <property type="match status" value="1"/>
</dbReference>
<dbReference type="PANTHER" id="PTHR33175">
    <property type="entry name" value="DNA-BINDING PROTEIN HU"/>
    <property type="match status" value="1"/>
</dbReference>
<dbReference type="PANTHER" id="PTHR33175:SF5">
    <property type="entry name" value="INTEGRATION HOST FACTOR SUBUNIT BETA"/>
    <property type="match status" value="1"/>
</dbReference>
<dbReference type="Pfam" id="PF00216">
    <property type="entry name" value="Bac_DNA_binding"/>
    <property type="match status" value="1"/>
</dbReference>
<dbReference type="PRINTS" id="PR01727">
    <property type="entry name" value="DNABINDINGHU"/>
</dbReference>
<dbReference type="SMART" id="SM00411">
    <property type="entry name" value="BHL"/>
    <property type="match status" value="1"/>
</dbReference>
<dbReference type="SUPFAM" id="SSF47729">
    <property type="entry name" value="IHF-like DNA-binding proteins"/>
    <property type="match status" value="1"/>
</dbReference>
<dbReference type="PROSITE" id="PS00045">
    <property type="entry name" value="HISTONE_LIKE"/>
    <property type="match status" value="1"/>
</dbReference>
<protein>
    <recommendedName>
        <fullName evidence="1">Integration host factor subunit beta</fullName>
        <shortName evidence="1">IHF-beta</shortName>
    </recommendedName>
</protein>
<keyword id="KW-0233">DNA recombination</keyword>
<keyword id="KW-0238">DNA-binding</keyword>
<keyword id="KW-0804">Transcription</keyword>
<keyword id="KW-0805">Transcription regulation</keyword>
<keyword id="KW-0810">Translation regulation</keyword>
<name>IHFB_RHOPS</name>
<comment type="function">
    <text evidence="1">This protein is one of the two subunits of integration host factor, a specific DNA-binding protein that functions in genetic recombination as well as in transcriptional and translational control.</text>
</comment>
<comment type="subunit">
    <text evidence="1">Heterodimer of an alpha and a beta chain.</text>
</comment>
<comment type="similarity">
    <text evidence="1">Belongs to the bacterial histone-like protein family.</text>
</comment>
<accession>Q13EQ5</accession>
<evidence type="ECO:0000255" key="1">
    <source>
        <dbReference type="HAMAP-Rule" id="MF_00381"/>
    </source>
</evidence>
<gene>
    <name evidence="1" type="primary">ihfB</name>
    <name evidence="1" type="synonym">himD</name>
    <name type="ordered locus">RPD_0194</name>
</gene>
<sequence length="101" mass="11370">MIKSELVQRIAEHNPHLYQRDVENIVNAILDEIVDALARGDRVELRGFGAFSVKHRPARAGRNPRTGAHVPVDQKSVPFFKTGKEMRERLNREPGNTDTGA</sequence>
<feature type="chain" id="PRO_1000060646" description="Integration host factor subunit beta">
    <location>
        <begin position="1"/>
        <end position="101"/>
    </location>
</feature>